<keyword id="KW-0496">Mitochondrion</keyword>
<keyword id="KW-0809">Transit peptide</keyword>
<comment type="function">
    <text evidence="3">As part of the mitochondrial 3' processome (MPsome), involved in the maturation of guided RNA (gRNA) precursors.</text>
</comment>
<comment type="subunit">
    <text evidence="3">Component of the mitochondrial 3' processome (MPsome) complex composed at least of terminal uridylyltransferase KRET1/TUT1, 3'-5' exonuclease DSS1, MPSS1, MPSS2 and MPSS3 (PubMed:26833087). Within the complex, interacts with KRET1 (PubMed:26833087).</text>
</comment>
<comment type="subcellular location">
    <subcellularLocation>
        <location evidence="3">Mitochondrion</location>
    </subcellularLocation>
</comment>
<comment type="developmental stage">
    <text evidence="3">Expressed at the procyclic stage (at protein level).</text>
</comment>
<comment type="disruption phenotype">
    <text evidence="3">RNAi-mediated knockdown at the procyclic stage causes moderate growth defect and reduces production of guided RNAs (gRNA) due to a block in the processing of gRNA precursors.</text>
</comment>
<feature type="transit peptide" description="Mitochondrion" evidence="1">
    <location>
        <begin position="1"/>
        <end position="117"/>
    </location>
</feature>
<feature type="chain" id="PRO_0000450682" description="Mitochondrial 3' processome subunit 1" evidence="1">
    <location>
        <begin position="118"/>
        <end position="1728"/>
    </location>
</feature>
<feature type="region of interest" description="Disordered" evidence="2">
    <location>
        <begin position="45"/>
        <end position="71"/>
    </location>
</feature>
<feature type="region of interest" description="Disordered" evidence="2">
    <location>
        <begin position="88"/>
        <end position="156"/>
    </location>
</feature>
<feature type="region of interest" description="Disordered" evidence="2">
    <location>
        <begin position="829"/>
        <end position="863"/>
    </location>
</feature>
<organism>
    <name type="scientific">Trypanosoma brucei brucei</name>
    <dbReference type="NCBI Taxonomy" id="5702"/>
    <lineage>
        <taxon>Eukaryota</taxon>
        <taxon>Discoba</taxon>
        <taxon>Euglenozoa</taxon>
        <taxon>Kinetoplastea</taxon>
        <taxon>Metakinetoplastina</taxon>
        <taxon>Trypanosomatida</taxon>
        <taxon>Trypanosomatidae</taxon>
        <taxon>Trypanosoma</taxon>
    </lineage>
</organism>
<proteinExistence type="evidence at protein level"/>
<dbReference type="EMBL" id="KT282120">
    <property type="protein sequence ID" value="AME15290.1"/>
    <property type="molecule type" value="Genomic_DNA"/>
</dbReference>
<dbReference type="GO" id="GO:0005739">
    <property type="term" value="C:mitochondrion"/>
    <property type="evidence" value="ECO:0000314"/>
    <property type="project" value="UniProtKB"/>
</dbReference>
<dbReference type="GO" id="GO:0032991">
    <property type="term" value="C:protein-containing complex"/>
    <property type="evidence" value="ECO:0000314"/>
    <property type="project" value="UniProtKB"/>
</dbReference>
<dbReference type="GO" id="GO:0080156">
    <property type="term" value="P:mitochondrial mRNA modification"/>
    <property type="evidence" value="ECO:0000315"/>
    <property type="project" value="UniProtKB"/>
</dbReference>
<dbReference type="CDD" id="cd23670">
    <property type="entry name" value="MPSS1_C"/>
    <property type="match status" value="1"/>
</dbReference>
<protein>
    <recommendedName>
        <fullName evidence="4">Mitochondrial 3' processome subunit 1</fullName>
    </recommendedName>
</protein>
<evidence type="ECO:0000255" key="1"/>
<evidence type="ECO:0000256" key="2">
    <source>
        <dbReference type="SAM" id="MobiDB-lite"/>
    </source>
</evidence>
<evidence type="ECO:0000269" key="3">
    <source>
    </source>
</evidence>
<evidence type="ECO:0000303" key="4">
    <source>
    </source>
</evidence>
<evidence type="ECO:0000312" key="5">
    <source>
        <dbReference type="EMBL" id="AME15290.1"/>
    </source>
</evidence>
<reference evidence="5" key="1">
    <citation type="journal article" date="2016" name="Mol. Cell">
        <title>Antisense Transcripts Delimit Exonucleolytic Activity of the Mitochondrial 3' Processome to Generate Guide RNAs.</title>
        <authorList>
            <person name="Suematsu T."/>
            <person name="Zhang L."/>
            <person name="Aphasizheva I."/>
            <person name="Monti S."/>
            <person name="Huang L."/>
            <person name="Wang Q."/>
            <person name="Costello C.E."/>
            <person name="Aphasizhev R."/>
        </authorList>
    </citation>
    <scope>NUCLEOTIDE SEQUENCE [GENOMIC DNA]</scope>
    <scope>FUNCTION</scope>
    <scope>IDENTIFICATION IN THE MPSOME COMPLEX</scope>
    <scope>INTERACTION WITH KRET1</scope>
    <scope>SUBCELLULAR LOCATION</scope>
    <scope>DEVELOPMENTAL STAGE</scope>
    <scope>IDENTIFICATION BY MASS SPECTROMETRY</scope>
    <scope>DISRUPTION PHENOTYPE</scope>
</reference>
<sequence length="1728" mass="191362">MRRLILSQTLRVAGRHRPPVAMFLQRFYRGHGISTALPLHYSKRHRKREGRMYGKPLRPVSDGENGASGDGGVLTRWEAVVSSRHQCESPVQTLAKSEKPKKAENTVAGKMTGSSRFSHRRDHSAYPSGVQPAPLATSGLPTQSSERQQQKQIGQQQVPLDALHRLFKVHAVMRTNYEALGKCTKVLKSFSTACAEALLQLGVLQKEQPSAMERKGFIDVQLCKSRVTEASKNGTSSPCFVLPPESPLYRTTIKFPTITVEHVLTTTVPAGCGAKDSGGDIMSVDMEGAAPFPMGHCESRPSTSAGNGVTVEYDCEGDVLSHGAAWNSIIEGFGQLALNLKQNASVSDFAQLAETLAYFKWVKDEEQVGWGTEDCVVKKFREAMANAKDTSASGSDPNTSDVSAALAAIAESFLRKIPRVDCIGSAVVHRGGERTAPSVHAIDVMLNLALRMCLSQWHAMSHFERMNIVLFCTYPWFAEDLSIAAGLCLTQSYLQSLLRADADVTYQHTFHYVRRVSRLCWPCIHDTDSAPVKKLLFPRDPQGTAVSSHALEAVSVEEKDNQLNQKEGLQGEEQATTTSESKLMWLPSFKDASCVSYGSSMKQRAAYELLLLWMTCVNPSGLHRSSPHGRYVSATGIAIIDVDLFVTQRFRTGKSKDEWLLLHPVEGDVVASVTIRTMVQHCETPYALTRLFFCNFHSVLPHIWGGIGARRREIIWTAWCRAVAQPLVNTLSGSDEGQREDDGGMQTLQITVDNADRTLDYLKPLISALTSDELFLRLIMRCADKSLEEMACEIGSGNNTLPLSKWCAQLAGFVYSVAFALHCRAKREGCNRDGGPSRPNTATDSANKKVVSGKQTDNLPKGTQEDISDLQLQFKAAVSALLRKLSAGDTQVAEQLLHHFYEPHFSGDQEREVVEDIQRHLQQVCDSQSRDALHAWIECSARASCEATVPLKEELLCKWQRTVLEADAGLPVVLPTIVECCRGLVGLVKKRGRNISGRRQGQQRGTESTTVGEESSCKEVFSKEELPVVITVLSRAMLTRTSTVSTVGLTKISSEISTLLSSCGYETADGNTSGGGRNGRELCDTNTATITSATAGERTVELELILSGEIDQKAGELPWITILEAVQLQLVPYTVVKNLLTSFKGGCDNGKERLRWQELQRDFQRKRHHRLVGNTLVFRWYGCAVPNDEGWEDGSGLMRPMAEDRDNVHSASHQGRTSTELGAFTRRLLKTLARAEVTRLDDRKEITTQTFVVGPSDDSATRHPTPGQEEDANLQRLDLLFRVHTLAAHILMTASTKKPHMIHELYDTLLHLVERVMPTTPNAPGNASDLLLLWLVGSAVAVGLRFRPNFLIKWPSTPEVSSGNLKSCPSAEEKTVHILRDIEPYLQSELLRPTVRLRFVINVLVALRSLELLGARIDVEGLHMDQLLVRASADRRLLSRHVNLFLIGCSALQSTQSSILHTALHLREAKYNLSFAEIERAFVAIALSADTFARQHEALMEQNYQQQQNRTLSVTVAANNTTPALRVSPVQLRHAWSALGRRVLENAGESPTDLFVRGLQCAAAVGCIDSALYQQLLSYVVEFRWEDLHILDWVMILRTVRQSFENRRNLEAYLKEPLQAFMLTMTDSGDNSTEQSVQKVNLKNHEGEQLLEGLCLFAEALPGLFIGDRELWGLLWQALGSQWSACFNAASNIEEQQRITAWLQEINASYAWAARAAGFRGLDEPTAL</sequence>
<name>MPSS1_TRYBB</name>
<accession>A0A120KVR8</accession>
<gene>
    <name evidence="4" type="primary">MPSS1</name>
</gene>